<proteinExistence type="evidence at protein level"/>
<organism>
    <name type="scientific">Mus musculus</name>
    <name type="common">Mouse</name>
    <dbReference type="NCBI Taxonomy" id="10090"/>
    <lineage>
        <taxon>Eukaryota</taxon>
        <taxon>Metazoa</taxon>
        <taxon>Chordata</taxon>
        <taxon>Craniata</taxon>
        <taxon>Vertebrata</taxon>
        <taxon>Euteleostomi</taxon>
        <taxon>Mammalia</taxon>
        <taxon>Eutheria</taxon>
        <taxon>Euarchontoglires</taxon>
        <taxon>Glires</taxon>
        <taxon>Rodentia</taxon>
        <taxon>Myomorpha</taxon>
        <taxon>Muroidea</taxon>
        <taxon>Muridae</taxon>
        <taxon>Murinae</taxon>
        <taxon>Mus</taxon>
        <taxon>Mus</taxon>
    </lineage>
</organism>
<keyword id="KW-1185">Reference proteome</keyword>
<evidence type="ECO:0000305" key="1"/>
<sequence>MPGSEMPAPCVFAPDMAEQVPLWHHYLLAIQSRESPRVQDYQRAENILLTVLERVHALDSRFIVDYSRDLEAFQFALRSSEDPLDVEVLLGVDSEALLIEESEATEPGDGPAICRLGVLKEASGLEPWMTADIFSVSSEDRDKCCGHLVPSKVLCVLKDLLVAAIVHCKHHRLIPPGSLNAANLKEGQMRLSLLVSSGWRKIRFNVVPVVRKKHRVPALEGAQLKLGFPEGILRRIASHGVDLVPANAQHWRISTGYLLSRLLDALGSLPGHRLDSLSILDRVNLESWQGGSQNHGLTFDHLKTVLLWASTLFPAPEDWADLQGSVYRQLVVLLCCLATRKLPHFLYPEHNLLQDGGLDLGAIYQRVEHFASQPEESLRIHVTHLGPSRPPRIDNGVKALLQLPASDPTYWATAYFDFLLDKFQVFNIQDKDRISAMQNIFQKTKTMGSENS</sequence>
<dbReference type="EMBL" id="AK009193">
    <property type="protein sequence ID" value="BAC25245.1"/>
    <property type="molecule type" value="mRNA"/>
</dbReference>
<dbReference type="EMBL" id="AK081300">
    <property type="protein sequence ID" value="BAC38187.1"/>
    <property type="molecule type" value="mRNA"/>
</dbReference>
<dbReference type="EMBL" id="BC089525">
    <property type="protein sequence ID" value="AAH89525.1"/>
    <property type="molecule type" value="mRNA"/>
</dbReference>
<dbReference type="CCDS" id="CCDS15185.1"/>
<dbReference type="RefSeq" id="NP_001153412.1">
    <property type="nucleotide sequence ID" value="NM_001159940.2"/>
</dbReference>
<dbReference type="RefSeq" id="NP_765999.3">
    <property type="nucleotide sequence ID" value="NM_172411.5"/>
</dbReference>
<dbReference type="SMR" id="Q8CEZ4"/>
<dbReference type="FunCoup" id="Q8CEZ4">
    <property type="interactions" value="1"/>
</dbReference>
<dbReference type="STRING" id="10090.ENSMUSP00000035332"/>
<dbReference type="GlyGen" id="Q8CEZ4">
    <property type="glycosylation" value="1 site, 1 O-linked glycan (1 site)"/>
</dbReference>
<dbReference type="PhosphoSitePlus" id="Q8CEZ4"/>
<dbReference type="PaxDb" id="10090-ENSMUSP00000035332"/>
<dbReference type="Antibodypedia" id="66213">
    <property type="antibodies" value="45 antibodies from 9 providers"/>
</dbReference>
<dbReference type="DNASU" id="71874"/>
<dbReference type="Ensembl" id="ENSMUST00000043718.12">
    <property type="protein sequence ID" value="ENSMUSP00000035332.6"/>
    <property type="gene ID" value="ENSMUSG00000034159.13"/>
</dbReference>
<dbReference type="Ensembl" id="ENSMUST00000143419.2">
    <property type="protein sequence ID" value="ENSMUSP00000115971.2"/>
    <property type="gene ID" value="ENSMUSG00000034159.13"/>
</dbReference>
<dbReference type="GeneID" id="71874"/>
<dbReference type="KEGG" id="mmu:71874"/>
<dbReference type="UCSC" id="uc007cdj.2">
    <property type="organism name" value="mouse"/>
</dbReference>
<dbReference type="AGR" id="MGI:1919124"/>
<dbReference type="CTD" id="79919"/>
<dbReference type="MGI" id="MGI:1919124">
    <property type="gene designation" value="Mab21l4"/>
</dbReference>
<dbReference type="VEuPathDB" id="HostDB:ENSMUSG00000034159"/>
<dbReference type="eggNOG" id="ENOG502QV1H">
    <property type="taxonomic scope" value="Eukaryota"/>
</dbReference>
<dbReference type="GeneTree" id="ENSGT01050000244827"/>
<dbReference type="HOGENOM" id="CLU_058747_0_0_1"/>
<dbReference type="InParanoid" id="Q8CEZ4"/>
<dbReference type="OMA" id="VHCKHHS"/>
<dbReference type="OrthoDB" id="9922809at2759"/>
<dbReference type="PhylomeDB" id="Q8CEZ4"/>
<dbReference type="TreeFam" id="TF315012"/>
<dbReference type="BioGRID-ORCS" id="71874">
    <property type="hits" value="5 hits in 76 CRISPR screens"/>
</dbReference>
<dbReference type="PRO" id="PR:Q8CEZ4"/>
<dbReference type="Proteomes" id="UP000000589">
    <property type="component" value="Chromosome 1"/>
</dbReference>
<dbReference type="RNAct" id="Q8CEZ4">
    <property type="molecule type" value="protein"/>
</dbReference>
<dbReference type="Bgee" id="ENSMUSG00000034159">
    <property type="expression patterns" value="Expressed in esophagus and 48 other cell types or tissues"/>
</dbReference>
<dbReference type="Gene3D" id="1.10.1410.40">
    <property type="match status" value="1"/>
</dbReference>
<dbReference type="InterPro" id="IPR046906">
    <property type="entry name" value="Mab-21_HhH/H2TH-like"/>
</dbReference>
<dbReference type="InterPro" id="IPR024810">
    <property type="entry name" value="MAB21L/cGLR"/>
</dbReference>
<dbReference type="PANTHER" id="PTHR10656">
    <property type="entry name" value="CELL FATE DETERMINING PROTEIN MAB21-RELATED"/>
    <property type="match status" value="1"/>
</dbReference>
<dbReference type="PANTHER" id="PTHR10656:SF7">
    <property type="entry name" value="PROTEIN MAB-21-LIKE 4"/>
    <property type="match status" value="1"/>
</dbReference>
<dbReference type="Pfam" id="PF20266">
    <property type="entry name" value="Mab-21_C"/>
    <property type="match status" value="1"/>
</dbReference>
<dbReference type="SMART" id="SM01265">
    <property type="entry name" value="Mab-21"/>
    <property type="match status" value="1"/>
</dbReference>
<gene>
    <name type="primary">Mab21l4</name>
</gene>
<name>MB214_MOUSE</name>
<reference key="1">
    <citation type="journal article" date="2005" name="Science">
        <title>The transcriptional landscape of the mammalian genome.</title>
        <authorList>
            <person name="Carninci P."/>
            <person name="Kasukawa T."/>
            <person name="Katayama S."/>
            <person name="Gough J."/>
            <person name="Frith M.C."/>
            <person name="Maeda N."/>
            <person name="Oyama R."/>
            <person name="Ravasi T."/>
            <person name="Lenhard B."/>
            <person name="Wells C."/>
            <person name="Kodzius R."/>
            <person name="Shimokawa K."/>
            <person name="Bajic V.B."/>
            <person name="Brenner S.E."/>
            <person name="Batalov S."/>
            <person name="Forrest A.R."/>
            <person name="Zavolan M."/>
            <person name="Davis M.J."/>
            <person name="Wilming L.G."/>
            <person name="Aidinis V."/>
            <person name="Allen J.E."/>
            <person name="Ambesi-Impiombato A."/>
            <person name="Apweiler R."/>
            <person name="Aturaliya R.N."/>
            <person name="Bailey T.L."/>
            <person name="Bansal M."/>
            <person name="Baxter L."/>
            <person name="Beisel K.W."/>
            <person name="Bersano T."/>
            <person name="Bono H."/>
            <person name="Chalk A.M."/>
            <person name="Chiu K.P."/>
            <person name="Choudhary V."/>
            <person name="Christoffels A."/>
            <person name="Clutterbuck D.R."/>
            <person name="Crowe M.L."/>
            <person name="Dalla E."/>
            <person name="Dalrymple B.P."/>
            <person name="de Bono B."/>
            <person name="Della Gatta G."/>
            <person name="di Bernardo D."/>
            <person name="Down T."/>
            <person name="Engstrom P."/>
            <person name="Fagiolini M."/>
            <person name="Faulkner G."/>
            <person name="Fletcher C.F."/>
            <person name="Fukushima T."/>
            <person name="Furuno M."/>
            <person name="Futaki S."/>
            <person name="Gariboldi M."/>
            <person name="Georgii-Hemming P."/>
            <person name="Gingeras T.R."/>
            <person name="Gojobori T."/>
            <person name="Green R.E."/>
            <person name="Gustincich S."/>
            <person name="Harbers M."/>
            <person name="Hayashi Y."/>
            <person name="Hensch T.K."/>
            <person name="Hirokawa N."/>
            <person name="Hill D."/>
            <person name="Huminiecki L."/>
            <person name="Iacono M."/>
            <person name="Ikeo K."/>
            <person name="Iwama A."/>
            <person name="Ishikawa T."/>
            <person name="Jakt M."/>
            <person name="Kanapin A."/>
            <person name="Katoh M."/>
            <person name="Kawasawa Y."/>
            <person name="Kelso J."/>
            <person name="Kitamura H."/>
            <person name="Kitano H."/>
            <person name="Kollias G."/>
            <person name="Krishnan S.P."/>
            <person name="Kruger A."/>
            <person name="Kummerfeld S.K."/>
            <person name="Kurochkin I.V."/>
            <person name="Lareau L.F."/>
            <person name="Lazarevic D."/>
            <person name="Lipovich L."/>
            <person name="Liu J."/>
            <person name="Liuni S."/>
            <person name="McWilliam S."/>
            <person name="Madan Babu M."/>
            <person name="Madera M."/>
            <person name="Marchionni L."/>
            <person name="Matsuda H."/>
            <person name="Matsuzawa S."/>
            <person name="Miki H."/>
            <person name="Mignone F."/>
            <person name="Miyake S."/>
            <person name="Morris K."/>
            <person name="Mottagui-Tabar S."/>
            <person name="Mulder N."/>
            <person name="Nakano N."/>
            <person name="Nakauchi H."/>
            <person name="Ng P."/>
            <person name="Nilsson R."/>
            <person name="Nishiguchi S."/>
            <person name="Nishikawa S."/>
            <person name="Nori F."/>
            <person name="Ohara O."/>
            <person name="Okazaki Y."/>
            <person name="Orlando V."/>
            <person name="Pang K.C."/>
            <person name="Pavan W.J."/>
            <person name="Pavesi G."/>
            <person name="Pesole G."/>
            <person name="Petrovsky N."/>
            <person name="Piazza S."/>
            <person name="Reed J."/>
            <person name="Reid J.F."/>
            <person name="Ring B.Z."/>
            <person name="Ringwald M."/>
            <person name="Rost B."/>
            <person name="Ruan Y."/>
            <person name="Salzberg S.L."/>
            <person name="Sandelin A."/>
            <person name="Schneider C."/>
            <person name="Schoenbach C."/>
            <person name="Sekiguchi K."/>
            <person name="Semple C.A."/>
            <person name="Seno S."/>
            <person name="Sessa L."/>
            <person name="Sheng Y."/>
            <person name="Shibata Y."/>
            <person name="Shimada H."/>
            <person name="Shimada K."/>
            <person name="Silva D."/>
            <person name="Sinclair B."/>
            <person name="Sperling S."/>
            <person name="Stupka E."/>
            <person name="Sugiura K."/>
            <person name="Sultana R."/>
            <person name="Takenaka Y."/>
            <person name="Taki K."/>
            <person name="Tammoja K."/>
            <person name="Tan S.L."/>
            <person name="Tang S."/>
            <person name="Taylor M.S."/>
            <person name="Tegner J."/>
            <person name="Teichmann S.A."/>
            <person name="Ueda H.R."/>
            <person name="van Nimwegen E."/>
            <person name="Verardo R."/>
            <person name="Wei C.L."/>
            <person name="Yagi K."/>
            <person name="Yamanishi H."/>
            <person name="Zabarovsky E."/>
            <person name="Zhu S."/>
            <person name="Zimmer A."/>
            <person name="Hide W."/>
            <person name="Bult C."/>
            <person name="Grimmond S.M."/>
            <person name="Teasdale R.D."/>
            <person name="Liu E.T."/>
            <person name="Brusic V."/>
            <person name="Quackenbush J."/>
            <person name="Wahlestedt C."/>
            <person name="Mattick J.S."/>
            <person name="Hume D.A."/>
            <person name="Kai C."/>
            <person name="Sasaki D."/>
            <person name="Tomaru Y."/>
            <person name="Fukuda S."/>
            <person name="Kanamori-Katayama M."/>
            <person name="Suzuki M."/>
            <person name="Aoki J."/>
            <person name="Arakawa T."/>
            <person name="Iida J."/>
            <person name="Imamura K."/>
            <person name="Itoh M."/>
            <person name="Kato T."/>
            <person name="Kawaji H."/>
            <person name="Kawagashira N."/>
            <person name="Kawashima T."/>
            <person name="Kojima M."/>
            <person name="Kondo S."/>
            <person name="Konno H."/>
            <person name="Nakano K."/>
            <person name="Ninomiya N."/>
            <person name="Nishio T."/>
            <person name="Okada M."/>
            <person name="Plessy C."/>
            <person name="Shibata K."/>
            <person name="Shiraki T."/>
            <person name="Suzuki S."/>
            <person name="Tagami M."/>
            <person name="Waki K."/>
            <person name="Watahiki A."/>
            <person name="Okamura-Oho Y."/>
            <person name="Suzuki H."/>
            <person name="Kawai J."/>
            <person name="Hayashizaki Y."/>
        </authorList>
    </citation>
    <scope>NUCLEOTIDE SEQUENCE [LARGE SCALE MRNA]</scope>
    <source>
        <strain>C57BL/6J</strain>
        <tissue>Head</tissue>
        <tissue>Tongue</tissue>
    </source>
</reference>
<reference key="2">
    <citation type="journal article" date="2004" name="Genome Res.">
        <title>The status, quality, and expansion of the NIH full-length cDNA project: the Mammalian Gene Collection (MGC).</title>
        <authorList>
            <consortium name="The MGC Project Team"/>
        </authorList>
    </citation>
    <scope>NUCLEOTIDE SEQUENCE [LARGE SCALE MRNA]</scope>
    <source>
        <tissue>Kidney</tissue>
    </source>
</reference>
<reference key="3">
    <citation type="journal article" date="2010" name="Cell">
        <title>A tissue-specific atlas of mouse protein phosphorylation and expression.</title>
        <authorList>
            <person name="Huttlin E.L."/>
            <person name="Jedrychowski M.P."/>
            <person name="Elias J.E."/>
            <person name="Goswami T."/>
            <person name="Rad R."/>
            <person name="Beausoleil S.A."/>
            <person name="Villen J."/>
            <person name="Haas W."/>
            <person name="Sowa M.E."/>
            <person name="Gygi S.P."/>
        </authorList>
    </citation>
    <scope>IDENTIFICATION BY MASS SPECTROMETRY [LARGE SCALE ANALYSIS]</scope>
    <source>
        <tissue>Lung</tissue>
    </source>
</reference>
<accession>Q8CEZ4</accession>
<accession>Q5FWA3</accession>
<accession>Q8C4S6</accession>
<protein>
    <recommendedName>
        <fullName evidence="1">Protein mab-21-like 4</fullName>
    </recommendedName>
    <alternativeName>
        <fullName evidence="1">Uncharacterized protein C2orf54 homolog</fullName>
    </alternativeName>
</protein>
<feature type="chain" id="PRO_0000288450" description="Protein mab-21-like 4">
    <location>
        <begin position="1"/>
        <end position="452"/>
    </location>
</feature>
<feature type="sequence conflict" description="In Ref. 1; BAC25245." evidence="1" ref="1">
    <original>I</original>
    <variation>T</variation>
    <location>
        <position position="202"/>
    </location>
</feature>
<feature type="sequence conflict" description="In Ref. 1; BAC25245." evidence="1" ref="1">
    <original>I</original>
    <variation>T</variation>
    <location>
        <position position="253"/>
    </location>
</feature>
<feature type="sequence conflict" description="In Ref. 2; AAH89525." evidence="1" ref="2">
    <original>S</original>
    <variation>T</variation>
    <location>
        <position position="452"/>
    </location>
</feature>